<proteinExistence type="inferred from homology"/>
<organism>
    <name type="scientific">Yarrowia lipolytica (strain CLIB 122 / E 150)</name>
    <name type="common">Yeast</name>
    <name type="synonym">Candida lipolytica</name>
    <dbReference type="NCBI Taxonomy" id="284591"/>
    <lineage>
        <taxon>Eukaryota</taxon>
        <taxon>Fungi</taxon>
        <taxon>Dikarya</taxon>
        <taxon>Ascomycota</taxon>
        <taxon>Saccharomycotina</taxon>
        <taxon>Dipodascomycetes</taxon>
        <taxon>Dipodascales</taxon>
        <taxon>Dipodascales incertae sedis</taxon>
        <taxon>Yarrowia</taxon>
    </lineage>
</organism>
<sequence>MSWWSSTPSIDEQVEKATSESLPSGESDLALNLEICDLIRSKTVPAKDAMRSLKRRLLNRNPNVQLAALQLTDVCIKNGGSHFLVEIASREFVDPLMAIARNDDANPEVRQRVLQLLQQWAVAFAGQLQLQQVENAVTQLKSEGVSFPSASHDNAAVTSTFIDTKAPPEWIDSDVCMESGVAFSFLNRKHHCRNCGGVFTQACCQNYITLPHFGINVPVRVCNGCFKNLKKGKSDAPIHKPVPGATTTAPSSAPPANSAPNDDEDDIQKAIRLSLQEQESYKPPPPAAATSNDDDEDMKAAIAASLRDMENERQTGQTSASAGGLSSASTTVMAPSLTDLTATEESNINLLSLLVERLKGEPQGTILREPKIQELYDTVGNLRPKLARTMGETISKYDSLVDMHAKMTTVIRYYDALLEEKLNQAYTNRQSGGYAPQPHLSHQMTGQPPHLAPHLTGQITGQPHMGYQHTGQAPYLTGQVTGQAPYLSNQPTGHLTNHYTGSAPSAPQYGGPPAQNVYNAPSYQYSGAPEYDYASSPSAPSAPGGPSAPSAPAQPKEESAPLIEL</sequence>
<evidence type="ECO:0000250" key="1"/>
<evidence type="ECO:0000255" key="2">
    <source>
        <dbReference type="PROSITE-ProRule" id="PRU00091"/>
    </source>
</evidence>
<evidence type="ECO:0000255" key="3">
    <source>
        <dbReference type="PROSITE-ProRule" id="PRU00213"/>
    </source>
</evidence>
<evidence type="ECO:0000255" key="4">
    <source>
        <dbReference type="PROSITE-ProRule" id="PRU00218"/>
    </source>
</evidence>
<evidence type="ECO:0000256" key="5">
    <source>
        <dbReference type="SAM" id="MobiDB-lite"/>
    </source>
</evidence>
<evidence type="ECO:0000305" key="6"/>
<name>VPS27_YARLI</name>
<dbReference type="EMBL" id="CR382128">
    <property type="protein sequence ID" value="CAG82705.1"/>
    <property type="molecule type" value="Genomic_DNA"/>
</dbReference>
<dbReference type="RefSeq" id="XP_500478.1">
    <property type="nucleotide sequence ID" value="XM_500478.1"/>
</dbReference>
<dbReference type="SMR" id="Q6CFT4"/>
<dbReference type="FunCoup" id="Q6CFT4">
    <property type="interactions" value="115"/>
</dbReference>
<dbReference type="STRING" id="284591.Q6CFT4"/>
<dbReference type="EnsemblFungi" id="CAG82705">
    <property type="protein sequence ID" value="CAG82705"/>
    <property type="gene ID" value="YALI0_B04070g"/>
</dbReference>
<dbReference type="KEGG" id="yli:2906618"/>
<dbReference type="VEuPathDB" id="FungiDB:YALI0_B04070g"/>
<dbReference type="HOGENOM" id="CLU_011862_2_1_1"/>
<dbReference type="InParanoid" id="Q6CFT4"/>
<dbReference type="OMA" id="HTWGGNT"/>
<dbReference type="OrthoDB" id="96263at4891"/>
<dbReference type="Proteomes" id="UP000001300">
    <property type="component" value="Chromosome B"/>
</dbReference>
<dbReference type="GO" id="GO:0010008">
    <property type="term" value="C:endosome membrane"/>
    <property type="evidence" value="ECO:0007669"/>
    <property type="project" value="UniProtKB-SubCell"/>
</dbReference>
<dbReference type="GO" id="GO:0033565">
    <property type="term" value="C:ESCRT-0 complex"/>
    <property type="evidence" value="ECO:0000318"/>
    <property type="project" value="GO_Central"/>
</dbReference>
<dbReference type="GO" id="GO:0005774">
    <property type="term" value="C:vacuolar membrane"/>
    <property type="evidence" value="ECO:0007669"/>
    <property type="project" value="EnsemblFungi"/>
</dbReference>
<dbReference type="GO" id="GO:0036435">
    <property type="term" value="F:K48-linked polyubiquitin modification-dependent protein binding"/>
    <property type="evidence" value="ECO:0007669"/>
    <property type="project" value="EnsemblFungi"/>
</dbReference>
<dbReference type="GO" id="GO:0070530">
    <property type="term" value="F:K63-linked polyubiquitin modification-dependent protein binding"/>
    <property type="evidence" value="ECO:0007669"/>
    <property type="project" value="EnsemblFungi"/>
</dbReference>
<dbReference type="GO" id="GO:0032266">
    <property type="term" value="F:phosphatidylinositol-3-phosphate binding"/>
    <property type="evidence" value="ECO:0000318"/>
    <property type="project" value="GO_Central"/>
</dbReference>
<dbReference type="GO" id="GO:0019904">
    <property type="term" value="F:protein domain specific binding"/>
    <property type="evidence" value="ECO:0007669"/>
    <property type="project" value="EnsemblFungi"/>
</dbReference>
<dbReference type="GO" id="GO:0046982">
    <property type="term" value="F:protein heterodimerization activity"/>
    <property type="evidence" value="ECO:0007669"/>
    <property type="project" value="EnsemblFungi"/>
</dbReference>
<dbReference type="GO" id="GO:0043130">
    <property type="term" value="F:ubiquitin binding"/>
    <property type="evidence" value="ECO:0000318"/>
    <property type="project" value="GO_Central"/>
</dbReference>
<dbReference type="GO" id="GO:0008270">
    <property type="term" value="F:zinc ion binding"/>
    <property type="evidence" value="ECO:0007669"/>
    <property type="project" value="UniProtKB-KW"/>
</dbReference>
<dbReference type="GO" id="GO:1904669">
    <property type="term" value="P:ATP export"/>
    <property type="evidence" value="ECO:0007669"/>
    <property type="project" value="EnsemblFungi"/>
</dbReference>
<dbReference type="GO" id="GO:0006995">
    <property type="term" value="P:cellular response to nitrogen starvation"/>
    <property type="evidence" value="ECO:0007669"/>
    <property type="project" value="EnsemblFungi"/>
</dbReference>
<dbReference type="GO" id="GO:0140504">
    <property type="term" value="P:microlipophagy"/>
    <property type="evidence" value="ECO:0007669"/>
    <property type="project" value="EnsemblFungi"/>
</dbReference>
<dbReference type="GO" id="GO:1903319">
    <property type="term" value="P:positive regulation of protein maturation"/>
    <property type="evidence" value="ECO:0007669"/>
    <property type="project" value="EnsemblFungi"/>
</dbReference>
<dbReference type="GO" id="GO:0045053">
    <property type="term" value="P:protein retention in Golgi apparatus"/>
    <property type="evidence" value="ECO:0007669"/>
    <property type="project" value="EnsemblFungi"/>
</dbReference>
<dbReference type="GO" id="GO:0009306">
    <property type="term" value="P:protein secretion"/>
    <property type="evidence" value="ECO:0007669"/>
    <property type="project" value="EnsemblFungi"/>
</dbReference>
<dbReference type="GO" id="GO:0006623">
    <property type="term" value="P:protein targeting to vacuole"/>
    <property type="evidence" value="ECO:0000318"/>
    <property type="project" value="GO_Central"/>
</dbReference>
<dbReference type="GO" id="GO:0043328">
    <property type="term" value="P:protein transport to vacuole involved in ubiquitin-dependent protein catabolic process via the multivesicular body sorting pathway"/>
    <property type="evidence" value="ECO:0000318"/>
    <property type="project" value="GO_Central"/>
</dbReference>
<dbReference type="CDD" id="cd15735">
    <property type="entry name" value="FYVE_spVPS27p_like"/>
    <property type="match status" value="1"/>
</dbReference>
<dbReference type="CDD" id="cd21385">
    <property type="entry name" value="GAT_Vps27"/>
    <property type="match status" value="1"/>
</dbReference>
<dbReference type="CDD" id="cd16979">
    <property type="entry name" value="VHS_Vps27"/>
    <property type="match status" value="1"/>
</dbReference>
<dbReference type="FunFam" id="1.20.5.1940:FF:000001">
    <property type="entry name" value="Vacuolar protein sorting-associated protein 27"/>
    <property type="match status" value="1"/>
</dbReference>
<dbReference type="Gene3D" id="1.20.5.1940">
    <property type="match status" value="1"/>
</dbReference>
<dbReference type="Gene3D" id="1.25.40.90">
    <property type="match status" value="1"/>
</dbReference>
<dbReference type="Gene3D" id="6.10.140.100">
    <property type="match status" value="1"/>
</dbReference>
<dbReference type="Gene3D" id="3.30.40.10">
    <property type="entry name" value="Zinc/RING finger domain, C3HC4 (zinc finger)"/>
    <property type="match status" value="1"/>
</dbReference>
<dbReference type="InterPro" id="IPR008942">
    <property type="entry name" value="ENTH_VHS"/>
</dbReference>
<dbReference type="InterPro" id="IPR017073">
    <property type="entry name" value="HGS/VPS27"/>
</dbReference>
<dbReference type="InterPro" id="IPR003903">
    <property type="entry name" value="UIM_dom"/>
</dbReference>
<dbReference type="InterPro" id="IPR002014">
    <property type="entry name" value="VHS_dom"/>
</dbReference>
<dbReference type="InterPro" id="IPR049425">
    <property type="entry name" value="Vps27_GAT-like"/>
</dbReference>
<dbReference type="InterPro" id="IPR000306">
    <property type="entry name" value="Znf_FYVE"/>
</dbReference>
<dbReference type="InterPro" id="IPR017455">
    <property type="entry name" value="Znf_FYVE-rel"/>
</dbReference>
<dbReference type="InterPro" id="IPR011011">
    <property type="entry name" value="Znf_FYVE_PHD"/>
</dbReference>
<dbReference type="InterPro" id="IPR013083">
    <property type="entry name" value="Znf_RING/FYVE/PHD"/>
</dbReference>
<dbReference type="PANTHER" id="PTHR47794">
    <property type="entry name" value="VACUOLAR PROTEIN SORTING-ASSOCIATED PROTEIN 27"/>
    <property type="match status" value="1"/>
</dbReference>
<dbReference type="PANTHER" id="PTHR47794:SF1">
    <property type="entry name" value="VACUOLAR PROTEIN SORTING-ASSOCIATED PROTEIN 27"/>
    <property type="match status" value="1"/>
</dbReference>
<dbReference type="Pfam" id="PF01363">
    <property type="entry name" value="FYVE"/>
    <property type="match status" value="1"/>
</dbReference>
<dbReference type="Pfam" id="PF02809">
    <property type="entry name" value="UIM"/>
    <property type="match status" value="2"/>
</dbReference>
<dbReference type="Pfam" id="PF00790">
    <property type="entry name" value="VHS"/>
    <property type="match status" value="1"/>
</dbReference>
<dbReference type="Pfam" id="PF21356">
    <property type="entry name" value="Vps27_GAT-like"/>
    <property type="match status" value="1"/>
</dbReference>
<dbReference type="PIRSF" id="PIRSF036956">
    <property type="entry name" value="Hrs_Vps27"/>
    <property type="match status" value="1"/>
</dbReference>
<dbReference type="SMART" id="SM00064">
    <property type="entry name" value="FYVE"/>
    <property type="match status" value="1"/>
</dbReference>
<dbReference type="SMART" id="SM00726">
    <property type="entry name" value="UIM"/>
    <property type="match status" value="2"/>
</dbReference>
<dbReference type="SMART" id="SM00288">
    <property type="entry name" value="VHS"/>
    <property type="match status" value="1"/>
</dbReference>
<dbReference type="SUPFAM" id="SSF48464">
    <property type="entry name" value="ENTH/VHS domain"/>
    <property type="match status" value="1"/>
</dbReference>
<dbReference type="SUPFAM" id="SSF57903">
    <property type="entry name" value="FYVE/PHD zinc finger"/>
    <property type="match status" value="1"/>
</dbReference>
<dbReference type="PROSITE" id="PS50330">
    <property type="entry name" value="UIM"/>
    <property type="match status" value="2"/>
</dbReference>
<dbReference type="PROSITE" id="PS50179">
    <property type="entry name" value="VHS"/>
    <property type="match status" value="1"/>
</dbReference>
<dbReference type="PROSITE" id="PS50178">
    <property type="entry name" value="ZF_FYVE"/>
    <property type="match status" value="1"/>
</dbReference>
<keyword id="KW-0967">Endosome</keyword>
<keyword id="KW-0472">Membrane</keyword>
<keyword id="KW-0479">Metal-binding</keyword>
<keyword id="KW-1185">Reference proteome</keyword>
<keyword id="KW-0677">Repeat</keyword>
<keyword id="KW-0862">Zinc</keyword>
<keyword id="KW-0863">Zinc-finger</keyword>
<reference key="1">
    <citation type="journal article" date="2004" name="Nature">
        <title>Genome evolution in yeasts.</title>
        <authorList>
            <person name="Dujon B."/>
            <person name="Sherman D."/>
            <person name="Fischer G."/>
            <person name="Durrens P."/>
            <person name="Casaregola S."/>
            <person name="Lafontaine I."/>
            <person name="de Montigny J."/>
            <person name="Marck C."/>
            <person name="Neuveglise C."/>
            <person name="Talla E."/>
            <person name="Goffard N."/>
            <person name="Frangeul L."/>
            <person name="Aigle M."/>
            <person name="Anthouard V."/>
            <person name="Babour A."/>
            <person name="Barbe V."/>
            <person name="Barnay S."/>
            <person name="Blanchin S."/>
            <person name="Beckerich J.-M."/>
            <person name="Beyne E."/>
            <person name="Bleykasten C."/>
            <person name="Boisrame A."/>
            <person name="Boyer J."/>
            <person name="Cattolico L."/>
            <person name="Confanioleri F."/>
            <person name="de Daruvar A."/>
            <person name="Despons L."/>
            <person name="Fabre E."/>
            <person name="Fairhead C."/>
            <person name="Ferry-Dumazet H."/>
            <person name="Groppi A."/>
            <person name="Hantraye F."/>
            <person name="Hennequin C."/>
            <person name="Jauniaux N."/>
            <person name="Joyet P."/>
            <person name="Kachouri R."/>
            <person name="Kerrest A."/>
            <person name="Koszul R."/>
            <person name="Lemaire M."/>
            <person name="Lesur I."/>
            <person name="Ma L."/>
            <person name="Muller H."/>
            <person name="Nicaud J.-M."/>
            <person name="Nikolski M."/>
            <person name="Oztas S."/>
            <person name="Ozier-Kalogeropoulos O."/>
            <person name="Pellenz S."/>
            <person name="Potier S."/>
            <person name="Richard G.-F."/>
            <person name="Straub M.-L."/>
            <person name="Suleau A."/>
            <person name="Swennen D."/>
            <person name="Tekaia F."/>
            <person name="Wesolowski-Louvel M."/>
            <person name="Westhof E."/>
            <person name="Wirth B."/>
            <person name="Zeniou-Meyer M."/>
            <person name="Zivanovic Y."/>
            <person name="Bolotin-Fukuhara M."/>
            <person name="Thierry A."/>
            <person name="Bouchier C."/>
            <person name="Caudron B."/>
            <person name="Scarpelli C."/>
            <person name="Gaillardin C."/>
            <person name="Weissenbach J."/>
            <person name="Wincker P."/>
            <person name="Souciet J.-L."/>
        </authorList>
    </citation>
    <scope>NUCLEOTIDE SEQUENCE [LARGE SCALE GENOMIC DNA]</scope>
    <source>
        <strain>CLIB 122 / E 150</strain>
    </source>
</reference>
<comment type="function">
    <text evidence="1">Component of the ESCRT-0 complex which is the sorting receptor for ubiquitinated cargo proteins at the multivesicular body (MVB) and recruits ESCRT-I to the MVB outer membrane.</text>
</comment>
<comment type="subunit">
    <text>Component of the ESCRT-0 complex composed of HSE1 and VPS27.</text>
</comment>
<comment type="subcellular location">
    <subcellularLocation>
        <location evidence="1">Endosome membrane</location>
        <topology evidence="1">Peripheral membrane protein</topology>
        <orientation evidence="1">Cytoplasmic side</orientation>
    </subcellularLocation>
</comment>
<comment type="domain">
    <text>The FYVE domain is involved in the binding to phosphatidylinositol 3-phosphate (PtdIns(3)P) which is required for the association to endosomal membranes.</text>
</comment>
<comment type="domain">
    <text evidence="1">Both IUM domains are necessary for efficient binding to ubiquitin.</text>
</comment>
<comment type="similarity">
    <text evidence="6">Belongs to the VPS27 family.</text>
</comment>
<protein>
    <recommendedName>
        <fullName>Vacuolar protein sorting-associated protein 27</fullName>
    </recommendedName>
</protein>
<feature type="chain" id="PRO_0000292525" description="Vacuolar protein sorting-associated protein 27">
    <location>
        <begin position="1"/>
        <end position="565"/>
    </location>
</feature>
<feature type="domain" description="VHS" evidence="4">
    <location>
        <begin position="19"/>
        <end position="148"/>
    </location>
</feature>
<feature type="domain" description="UIM 1" evidence="3">
    <location>
        <begin position="262"/>
        <end position="281"/>
    </location>
</feature>
<feature type="domain" description="UIM 2" evidence="3">
    <location>
        <begin position="293"/>
        <end position="312"/>
    </location>
</feature>
<feature type="zinc finger region" description="FYVE-type; degenerate" evidence="2">
    <location>
        <begin position="170"/>
        <end position="230"/>
    </location>
</feature>
<feature type="region of interest" description="Disordered" evidence="5">
    <location>
        <begin position="1"/>
        <end position="24"/>
    </location>
</feature>
<feature type="region of interest" description="Disordered" evidence="5">
    <location>
        <begin position="233"/>
        <end position="296"/>
    </location>
</feature>
<feature type="region of interest" description="Disordered" evidence="5">
    <location>
        <begin position="309"/>
        <end position="328"/>
    </location>
</feature>
<feature type="region of interest" description="Disordered" evidence="5">
    <location>
        <begin position="429"/>
        <end position="565"/>
    </location>
</feature>
<feature type="compositionally biased region" description="Polar residues" evidence="5">
    <location>
        <begin position="1"/>
        <end position="10"/>
    </location>
</feature>
<feature type="compositionally biased region" description="Low complexity" evidence="5">
    <location>
        <begin position="245"/>
        <end position="260"/>
    </location>
</feature>
<feature type="compositionally biased region" description="Low complexity" evidence="5">
    <location>
        <begin position="315"/>
        <end position="328"/>
    </location>
</feature>
<feature type="compositionally biased region" description="Polar residues" evidence="5">
    <location>
        <begin position="478"/>
        <end position="505"/>
    </location>
</feature>
<feature type="compositionally biased region" description="Polar residues" evidence="5">
    <location>
        <begin position="516"/>
        <end position="525"/>
    </location>
</feature>
<feature type="compositionally biased region" description="Low complexity" evidence="5">
    <location>
        <begin position="534"/>
        <end position="553"/>
    </location>
</feature>
<feature type="binding site" evidence="2">
    <location>
        <position position="192"/>
    </location>
    <ligand>
        <name>Zn(2+)</name>
        <dbReference type="ChEBI" id="CHEBI:29105"/>
    </ligand>
</feature>
<feature type="binding site" evidence="2">
    <location>
        <position position="195"/>
    </location>
    <ligand>
        <name>Zn(2+)</name>
        <dbReference type="ChEBI" id="CHEBI:29105"/>
    </ligand>
</feature>
<feature type="binding site" evidence="2">
    <location>
        <position position="222"/>
    </location>
    <ligand>
        <name>Zn(2+)</name>
        <dbReference type="ChEBI" id="CHEBI:29105"/>
    </ligand>
</feature>
<feature type="binding site" evidence="2">
    <location>
        <position position="225"/>
    </location>
    <ligand>
        <name>Zn(2+)</name>
        <dbReference type="ChEBI" id="CHEBI:29105"/>
    </ligand>
</feature>
<accession>Q6CFT4</accession>
<gene>
    <name type="primary">VPS27</name>
    <name type="ordered locus">YALI0B04070g</name>
</gene>